<protein>
    <recommendedName>
        <fullName>Fibroblast growth factor receptor 3</fullName>
        <shortName>FGFR-3</shortName>
        <ecNumber>2.7.10.1</ecNumber>
    </recommendedName>
    <alternativeName>
        <fullName>Heparin-binding growth factor receptor</fullName>
    </alternativeName>
    <cdAntigenName>CD333</cdAntigenName>
</protein>
<comment type="function">
    <text evidence="8 9 10 11 12 13">Tyrosine-protein kinase that acts as a cell-surface receptor for fibroblast growth factors and plays an essential role in the regulation of cell proliferation, differentiation and apoptosis. Plays an essential role in the regulation of chondrocyte differentiation, proliferation and apoptosis, and is required for normal skeleton development. Regulates both osteogenesis and postnatal bone mineralization by osteoblasts. Promotes apoptosis in chondrocytes, but can also promote cancer cell proliferation. Required for normal development of the inner ear. Phosphorylates PLCG1, CBL and FRS2. Ligand binding leads to the activation of several signaling cascades. Activation of PLCG1 leads to the production of the cellular signaling molecules diacylglycerol and inositol 1,4,5-trisphosphate. Phosphorylation of FRS2 triggers recruitment of GRB2, GAB1, PIK3R1 and SOS1, and mediates activation of RAS, MAPK1/ERK2, MAPK3/ERK1 and the MAP kinase signaling pathway, as well as of the AKT1 signaling pathway. Plays a role in the regulation of vitamin D metabolism. Mutations that lead to constitutive kinase activation or impair normal FGFR3 maturation, internalization and degradation lead to aberrant signaling. Over-expressed or constitutively activated FGFR3 promotes activation of STAT1, STAT5A and STAT5B. Plays a role in postnatal lung development.</text>
</comment>
<comment type="catalytic activity">
    <reaction evidence="6">
        <text>L-tyrosyl-[protein] + ATP = O-phospho-L-tyrosyl-[protein] + ADP + H(+)</text>
        <dbReference type="Rhea" id="RHEA:10596"/>
        <dbReference type="Rhea" id="RHEA-COMP:10136"/>
        <dbReference type="Rhea" id="RHEA-COMP:20101"/>
        <dbReference type="ChEBI" id="CHEBI:15378"/>
        <dbReference type="ChEBI" id="CHEBI:30616"/>
        <dbReference type="ChEBI" id="CHEBI:46858"/>
        <dbReference type="ChEBI" id="CHEBI:61978"/>
        <dbReference type="ChEBI" id="CHEBI:456216"/>
        <dbReference type="EC" id="2.7.10.1"/>
    </reaction>
</comment>
<comment type="activity regulation">
    <text evidence="1">Present in an inactive conformation in the absence of bound ligand. Ligand binding leads to dimerization and activation by autophosphorylation on tyrosine residues (By similarity).</text>
</comment>
<comment type="subunit">
    <text evidence="1">Monomer. Homodimer after ligand binding. Interacts with FGF1, FGF2, FGF4, FGF6; FGF8, FGF9, FGF10, FGF17, FGF18, FGF19, FGF20 and FGF23 (in vitro). Interacts with KLB. Affinity for fibroblast growth factors (FGFs) is increased by heparan sulfate glycosaminoglycans that function as coreceptors. Likewise, KLB increases the affinity for FGF19 and FGF21. Interacts with PIK3R1, PLCG1, SOCS1 and SOCS3 (By similarity).</text>
</comment>
<comment type="interaction">
    <interactant intactId="EBI-6287052">
        <id>Q61851</id>
    </interactant>
    <interactant intactId="EBI-8100899">
        <id>Q9JID9</id>
        <label>Sh2b2</label>
    </interactant>
    <organismsDiffer>false</organismsDiffer>
    <experiments>3</experiments>
</comment>
<comment type="interaction">
    <interactant intactId="EBI-15820536">
        <id>Q61851-1</id>
    </interactant>
    <interactant intactId="EBI-1570828">
        <id>O35082</id>
        <label>Kl</label>
    </interactant>
    <organismsDiffer>false</organismsDiffer>
    <experiments>2</experiments>
</comment>
<comment type="subcellular location">
    <subcellularLocation>
        <location>Cell membrane</location>
        <topology>Single-pass type I membrane protein</topology>
    </subcellularLocation>
    <subcellularLocation>
        <location evidence="1">Cytoplasmic vesicle</location>
    </subcellularLocation>
    <subcellularLocation>
        <location evidence="1">Endoplasmic reticulum</location>
    </subcellularLocation>
    <text evidence="1">The activated receptor is rapidly internalized and degraded. Detected in intracellular vesicles after internalization of the autophosphorylated receptor (By similarity).</text>
</comment>
<comment type="alternative products">
    <event type="alternative splicing"/>
    <isoform>
        <id>Q61851-1</id>
        <name>1</name>
        <name>IIIc</name>
        <sequence type="displayed"/>
    </isoform>
    <isoform>
        <id>Q61851-2</id>
        <name>2</name>
        <name>IIIb</name>
        <sequence type="described" ref="VSP_002990"/>
    </isoform>
</comment>
<comment type="tissue specificity">
    <text>In embryo, expressed in heart, lung, kidney, skin, head and liver but not in muscle. In adult, highest levels in brain. Also expressed in liver, lung, kidney, testis, ovary and uterus. Very low levels in heart, thymus, spleen and muscle.</text>
</comment>
<comment type="developmental stage">
    <text>Expressed in embryos from mid-gestation and in adult.</text>
</comment>
<comment type="domain">
    <text evidence="1">The second and third Ig-like domains directly interact with fibroblast growth factors (FGF) and heparan sulfate proteoglycans.</text>
</comment>
<comment type="PTM">
    <text evidence="1">Autophosphorylated. Binding of FGF family members together with heparan sulfate proteoglycan or heparin promotes receptor dimerization and autophosphorylation on tyrosine residues. Autophosphorylation occurs in trans between the two FGFR molecules present in the dimer. Phosphorylation at Tyr-719 is essential for stimulation of cell proliferation and activation of PIK3R1, STAT1 and MAP kinase signaling. Phosphorylation at Tyr-755 is required for interaction with PIK3R1 and PLCG1 (By similarity).</text>
</comment>
<comment type="PTM">
    <text evidence="1">Ubiquitinated. Is rapidly ubiquitinated after ligand binding and autophosphorylation, leading to receptor internalization and degradation. Subject to both proteasomal and lysosomal degradation (By similarity).</text>
</comment>
<comment type="PTM">
    <text evidence="1">N-glycosylated in the endoplasmic reticulum. The N-glycan chains undergo further maturation to an Endo H-resistant form in the Golgi apparatus (By similarity).</text>
</comment>
<comment type="disruption phenotype">
    <text evidence="9 10 11 13">Mice exhibit defects in their skeleton, including kyphosis, scoliosis, crooked tails and curvature and overgrowth of long bones and vertebrae. This bone dysplasia is due to defects in the regulation of chondrocyte proliferation and differentiation in the cartilaginous growth plate. Mice also display inner ear defects including failure of pillar cell differentiation and tunnel of Corti formation, resulting in profound deafness. Mice lacking both FGFR3 and FGFR4 display pronounced dwarfism, and while their lungs appear normal at birth, they are completely blocked in alveogenesis and do not form secondary septae to delimit alveoli. These mice also show elevated serum levels of 1,25-dihydroxyvitamin D3 and reduced serum phosphorus levels.</text>
</comment>
<comment type="similarity">
    <text evidence="5">Belongs to the protein kinase superfamily. Tyr protein kinase family. Fibroblast growth factor receptor subfamily.</text>
</comment>
<keyword id="KW-0025">Alternative splicing</keyword>
<keyword id="KW-0053">Apoptosis</keyword>
<keyword id="KW-0067">ATP-binding</keyword>
<keyword id="KW-1003">Cell membrane</keyword>
<keyword id="KW-0968">Cytoplasmic vesicle</keyword>
<keyword id="KW-1015">Disulfide bond</keyword>
<keyword id="KW-0256">Endoplasmic reticulum</keyword>
<keyword id="KW-0325">Glycoprotein</keyword>
<keyword id="KW-0393">Immunoglobulin domain</keyword>
<keyword id="KW-0418">Kinase</keyword>
<keyword id="KW-0472">Membrane</keyword>
<keyword id="KW-0547">Nucleotide-binding</keyword>
<keyword id="KW-0597">Phosphoprotein</keyword>
<keyword id="KW-0675">Receptor</keyword>
<keyword id="KW-1185">Reference proteome</keyword>
<keyword id="KW-0677">Repeat</keyword>
<keyword id="KW-0732">Signal</keyword>
<keyword id="KW-0808">Transferase</keyword>
<keyword id="KW-0812">Transmembrane</keyword>
<keyword id="KW-1133">Transmembrane helix</keyword>
<keyword id="KW-0829">Tyrosine-protein kinase</keyword>
<keyword id="KW-0832">Ubl conjugation</keyword>
<dbReference type="EC" id="2.7.10.1"/>
<dbReference type="EMBL" id="M81342">
    <property type="protein sequence ID" value="AAA39535.1"/>
    <property type="molecule type" value="mRNA"/>
</dbReference>
<dbReference type="EMBL" id="S56291">
    <property type="protein sequence ID" value="AAB25535.1"/>
    <property type="molecule type" value="mRNA"/>
</dbReference>
<dbReference type="EMBL" id="L26492">
    <property type="protein sequence ID" value="AAA21490.2"/>
    <property type="molecule type" value="Genomic_DNA"/>
</dbReference>
<dbReference type="PIR" id="A48991">
    <property type="entry name" value="A48991"/>
</dbReference>
<dbReference type="PIR" id="I55363">
    <property type="entry name" value="I55363"/>
</dbReference>
<dbReference type="SMR" id="Q61851"/>
<dbReference type="DIP" id="DIP-6031N"/>
<dbReference type="FunCoup" id="Q61851">
    <property type="interactions" value="435"/>
</dbReference>
<dbReference type="IntAct" id="Q61851">
    <property type="interactions" value="4"/>
</dbReference>
<dbReference type="MINT" id="Q61851"/>
<dbReference type="STRING" id="10090.ENSMUSP00000133064"/>
<dbReference type="BindingDB" id="Q61851"/>
<dbReference type="ChEMBL" id="CHEMBL4066"/>
<dbReference type="GlyConnect" id="2313">
    <property type="glycosylation" value="2 N-Linked glycans (1 site)"/>
</dbReference>
<dbReference type="GlyCosmos" id="Q61851">
    <property type="glycosylation" value="6 sites, 2 glycans"/>
</dbReference>
<dbReference type="GlyGen" id="Q61851">
    <property type="glycosylation" value="9 sites, 8 N-linked glycans (3 sites)"/>
</dbReference>
<dbReference type="iPTMnet" id="Q61851"/>
<dbReference type="PhosphoSitePlus" id="Q61851"/>
<dbReference type="jPOST" id="Q61851"/>
<dbReference type="PaxDb" id="10090-ENSMUSP00000085122"/>
<dbReference type="ProteomicsDB" id="271583">
    <molecule id="Q61851-1"/>
</dbReference>
<dbReference type="ProteomicsDB" id="271584">
    <molecule id="Q61851-2"/>
</dbReference>
<dbReference type="AGR" id="MGI:95524"/>
<dbReference type="MGI" id="MGI:95524">
    <property type="gene designation" value="Fgfr3"/>
</dbReference>
<dbReference type="eggNOG" id="KOG0200">
    <property type="taxonomic scope" value="Eukaryota"/>
</dbReference>
<dbReference type="InParanoid" id="Q61851"/>
<dbReference type="PhylomeDB" id="Q61851"/>
<dbReference type="BRENDA" id="2.7.10.1">
    <property type="organism ID" value="3474"/>
</dbReference>
<dbReference type="Reactome" id="R-MMU-109704">
    <property type="pathway name" value="PI3K Cascade"/>
</dbReference>
<dbReference type="Reactome" id="R-MMU-1257604">
    <property type="pathway name" value="PIP3 activates AKT signaling"/>
</dbReference>
<dbReference type="Reactome" id="R-MMU-190371">
    <property type="pathway name" value="FGFR3b ligand binding and activation"/>
</dbReference>
<dbReference type="Reactome" id="R-MMU-190372">
    <property type="pathway name" value="FGFR3c ligand binding and activation"/>
</dbReference>
<dbReference type="Reactome" id="R-MMU-5654227">
    <property type="pathway name" value="Phospholipase C-mediated cascade, FGFR3"/>
</dbReference>
<dbReference type="Reactome" id="R-MMU-5654704">
    <property type="pathway name" value="SHC-mediated cascade:FGFR3"/>
</dbReference>
<dbReference type="Reactome" id="R-MMU-5654706">
    <property type="pathway name" value="FRS-mediated FGFR3 signaling"/>
</dbReference>
<dbReference type="Reactome" id="R-MMU-5654710">
    <property type="pathway name" value="PI-3K cascade:FGFR3"/>
</dbReference>
<dbReference type="Reactome" id="R-MMU-5654732">
    <property type="pathway name" value="Negative regulation of FGFR3 signaling"/>
</dbReference>
<dbReference type="Reactome" id="R-MMU-5673001">
    <property type="pathway name" value="RAF/MAP kinase cascade"/>
</dbReference>
<dbReference type="Reactome" id="R-MMU-6811558">
    <property type="pathway name" value="PI5P, PP2A and IER3 Regulate PI3K/AKT Signaling"/>
</dbReference>
<dbReference type="ChiTaRS" id="Fgfr3">
    <property type="organism name" value="mouse"/>
</dbReference>
<dbReference type="PRO" id="PR:Q61851"/>
<dbReference type="Proteomes" id="UP000000589">
    <property type="component" value="Unplaced"/>
</dbReference>
<dbReference type="RNAct" id="Q61851">
    <property type="molecule type" value="protein"/>
</dbReference>
<dbReference type="GO" id="GO:0009898">
    <property type="term" value="C:cytoplasmic side of plasma membrane"/>
    <property type="evidence" value="ECO:0000314"/>
    <property type="project" value="MGI"/>
</dbReference>
<dbReference type="GO" id="GO:0031410">
    <property type="term" value="C:cytoplasmic vesicle"/>
    <property type="evidence" value="ECO:0007669"/>
    <property type="project" value="UniProtKB-KW"/>
</dbReference>
<dbReference type="GO" id="GO:0005783">
    <property type="term" value="C:endoplasmic reticulum"/>
    <property type="evidence" value="ECO:0007669"/>
    <property type="project" value="UniProtKB-SubCell"/>
</dbReference>
<dbReference type="GO" id="GO:0005764">
    <property type="term" value="C:lysosome"/>
    <property type="evidence" value="ECO:0000314"/>
    <property type="project" value="MGI"/>
</dbReference>
<dbReference type="GO" id="GO:0048471">
    <property type="term" value="C:perinuclear region of cytoplasm"/>
    <property type="evidence" value="ECO:0000314"/>
    <property type="project" value="MGI"/>
</dbReference>
<dbReference type="GO" id="GO:0005886">
    <property type="term" value="C:plasma membrane"/>
    <property type="evidence" value="ECO:0000250"/>
    <property type="project" value="UniProtKB"/>
</dbReference>
<dbReference type="GO" id="GO:0005524">
    <property type="term" value="F:ATP binding"/>
    <property type="evidence" value="ECO:0007669"/>
    <property type="project" value="UniProtKB-KW"/>
</dbReference>
<dbReference type="GO" id="GO:0017134">
    <property type="term" value="F:fibroblast growth factor binding"/>
    <property type="evidence" value="ECO:0000250"/>
    <property type="project" value="UniProtKB"/>
</dbReference>
<dbReference type="GO" id="GO:0005007">
    <property type="term" value="F:fibroblast growth factor receptor activity"/>
    <property type="evidence" value="ECO:0000314"/>
    <property type="project" value="MGI"/>
</dbReference>
<dbReference type="GO" id="GO:0035198">
    <property type="term" value="F:miRNA binding"/>
    <property type="evidence" value="ECO:0000314"/>
    <property type="project" value="MGI"/>
</dbReference>
<dbReference type="GO" id="GO:0004713">
    <property type="term" value="F:protein tyrosine kinase activity"/>
    <property type="evidence" value="ECO:0000250"/>
    <property type="project" value="UniProtKB"/>
</dbReference>
<dbReference type="GO" id="GO:0061144">
    <property type="term" value="P:alveolar secondary septum development"/>
    <property type="evidence" value="ECO:0000316"/>
    <property type="project" value="MGI"/>
</dbReference>
<dbReference type="GO" id="GO:0048708">
    <property type="term" value="P:astrocyte differentiation"/>
    <property type="evidence" value="ECO:0000315"/>
    <property type="project" value="MGI"/>
</dbReference>
<dbReference type="GO" id="GO:0060385">
    <property type="term" value="P:axonogenesis involved in innervation"/>
    <property type="evidence" value="ECO:0000315"/>
    <property type="project" value="MGI"/>
</dbReference>
<dbReference type="GO" id="GO:0060348">
    <property type="term" value="P:bone development"/>
    <property type="evidence" value="ECO:0000315"/>
    <property type="project" value="MGI"/>
</dbReference>
<dbReference type="GO" id="GO:0070977">
    <property type="term" value="P:bone maturation"/>
    <property type="evidence" value="ECO:0000315"/>
    <property type="project" value="BHF-UCL"/>
</dbReference>
<dbReference type="GO" id="GO:0030282">
    <property type="term" value="P:bone mineralization"/>
    <property type="evidence" value="ECO:0000315"/>
    <property type="project" value="BHF-UCL"/>
</dbReference>
<dbReference type="GO" id="GO:0060349">
    <property type="term" value="P:bone morphogenesis"/>
    <property type="evidence" value="ECO:0000315"/>
    <property type="project" value="BHF-UCL"/>
</dbReference>
<dbReference type="GO" id="GO:0061430">
    <property type="term" value="P:bone trabecula morphogenesis"/>
    <property type="evidence" value="ECO:0000315"/>
    <property type="project" value="MGI"/>
</dbReference>
<dbReference type="GO" id="GO:0055074">
    <property type="term" value="P:calcium ion homeostasis"/>
    <property type="evidence" value="ECO:0000316"/>
    <property type="project" value="MGI"/>
</dbReference>
<dbReference type="GO" id="GO:0051216">
    <property type="term" value="P:cartilage development"/>
    <property type="evidence" value="ECO:0000315"/>
    <property type="project" value="MGI"/>
</dbReference>
<dbReference type="GO" id="GO:0008283">
    <property type="term" value="P:cell population proliferation"/>
    <property type="evidence" value="ECO:0000315"/>
    <property type="project" value="MGI"/>
</dbReference>
<dbReference type="GO" id="GO:0022010">
    <property type="term" value="P:central nervous system myelination"/>
    <property type="evidence" value="ECO:0000315"/>
    <property type="project" value="MGI"/>
</dbReference>
<dbReference type="GO" id="GO:0090102">
    <property type="term" value="P:cochlea development"/>
    <property type="evidence" value="ECO:0000315"/>
    <property type="project" value="MGI"/>
</dbReference>
<dbReference type="GO" id="GO:0048546">
    <property type="term" value="P:digestive tract morphogenesis"/>
    <property type="evidence" value="ECO:0000315"/>
    <property type="project" value="MGI"/>
</dbReference>
<dbReference type="GO" id="GO:0001935">
    <property type="term" value="P:endothelial cell proliferation"/>
    <property type="evidence" value="ECO:0000315"/>
    <property type="project" value="MGI"/>
</dbReference>
<dbReference type="GO" id="GO:0072148">
    <property type="term" value="P:epithelial cell fate commitment"/>
    <property type="evidence" value="ECO:0000315"/>
    <property type="project" value="MGI"/>
</dbReference>
<dbReference type="GO" id="GO:0050673">
    <property type="term" value="P:epithelial cell proliferation"/>
    <property type="evidence" value="ECO:0000315"/>
    <property type="project" value="MGI"/>
</dbReference>
<dbReference type="GO" id="GO:0070371">
    <property type="term" value="P:ERK1 and ERK2 cascade"/>
    <property type="evidence" value="ECO:0000315"/>
    <property type="project" value="MGI"/>
</dbReference>
<dbReference type="GO" id="GO:1902178">
    <property type="term" value="P:fibroblast growth factor receptor apoptotic signaling pathway"/>
    <property type="evidence" value="ECO:0000250"/>
    <property type="project" value="UniProtKB"/>
</dbReference>
<dbReference type="GO" id="GO:0008543">
    <property type="term" value="P:fibroblast growth factor receptor signaling pathway"/>
    <property type="evidence" value="ECO:0000314"/>
    <property type="project" value="MGI"/>
</dbReference>
<dbReference type="GO" id="GO:0030900">
    <property type="term" value="P:forebrain development"/>
    <property type="evidence" value="ECO:0000315"/>
    <property type="project" value="MGI"/>
</dbReference>
<dbReference type="GO" id="GO:0042491">
    <property type="term" value="P:inner ear auditory receptor cell differentiation"/>
    <property type="evidence" value="ECO:0000315"/>
    <property type="project" value="MGI"/>
</dbReference>
<dbReference type="GO" id="GO:0048839">
    <property type="term" value="P:inner ear development"/>
    <property type="evidence" value="ECO:0000315"/>
    <property type="project" value="MGI"/>
</dbReference>
<dbReference type="GO" id="GO:0070307">
    <property type="term" value="P:lens fiber cell development"/>
    <property type="evidence" value="ECO:0000316"/>
    <property type="project" value="MGI"/>
</dbReference>
<dbReference type="GO" id="GO:0002089">
    <property type="term" value="P:lens morphogenesis in camera-type eye"/>
    <property type="evidence" value="ECO:0000315"/>
    <property type="project" value="MGI"/>
</dbReference>
<dbReference type="GO" id="GO:0000165">
    <property type="term" value="P:MAPK cascade"/>
    <property type="evidence" value="ECO:0000315"/>
    <property type="project" value="MGI"/>
</dbReference>
<dbReference type="GO" id="GO:0140014">
    <property type="term" value="P:mitotic nuclear division"/>
    <property type="evidence" value="ECO:0000316"/>
    <property type="project" value="MGI"/>
</dbReference>
<dbReference type="GO" id="GO:0002009">
    <property type="term" value="P:morphogenesis of an epithelium"/>
    <property type="evidence" value="ECO:0000315"/>
    <property type="project" value="MGI"/>
</dbReference>
<dbReference type="GO" id="GO:0048712">
    <property type="term" value="P:negative regulation of astrocyte differentiation"/>
    <property type="evidence" value="ECO:0000315"/>
    <property type="project" value="MGI"/>
</dbReference>
<dbReference type="GO" id="GO:0008285">
    <property type="term" value="P:negative regulation of cell population proliferation"/>
    <property type="evidence" value="ECO:0000315"/>
    <property type="project" value="MGI"/>
</dbReference>
<dbReference type="GO" id="GO:0048640">
    <property type="term" value="P:negative regulation of developmental growth"/>
    <property type="evidence" value="ECO:0000315"/>
    <property type="project" value="BHF-UCL"/>
</dbReference>
<dbReference type="GO" id="GO:0050680">
    <property type="term" value="P:negative regulation of epithelial cell proliferation"/>
    <property type="evidence" value="ECO:0000315"/>
    <property type="project" value="MGI"/>
</dbReference>
<dbReference type="GO" id="GO:0010629">
    <property type="term" value="P:negative regulation of gene expression"/>
    <property type="evidence" value="ECO:0000315"/>
    <property type="project" value="MGI"/>
</dbReference>
<dbReference type="GO" id="GO:0045608">
    <property type="term" value="P:negative regulation of inner ear auditory receptor cell differentiation"/>
    <property type="evidence" value="ECO:0000315"/>
    <property type="project" value="MGI"/>
</dbReference>
<dbReference type="GO" id="GO:0045839">
    <property type="term" value="P:negative regulation of mitotic nuclear division"/>
    <property type="evidence" value="ECO:0000316"/>
    <property type="project" value="MGI"/>
</dbReference>
<dbReference type="GO" id="GO:0007406">
    <property type="term" value="P:negative regulation of neuroblast proliferation"/>
    <property type="evidence" value="ECO:0000315"/>
    <property type="project" value="MGI"/>
</dbReference>
<dbReference type="GO" id="GO:0045879">
    <property type="term" value="P:negative regulation of smoothened signaling pathway"/>
    <property type="evidence" value="ECO:0000315"/>
    <property type="project" value="MGI"/>
</dbReference>
<dbReference type="GO" id="GO:0000122">
    <property type="term" value="P:negative regulation of transcription by RNA polymerase II"/>
    <property type="evidence" value="ECO:0000315"/>
    <property type="project" value="MGI"/>
</dbReference>
<dbReference type="GO" id="GO:0007405">
    <property type="term" value="P:neuroblast proliferation"/>
    <property type="evidence" value="ECO:0000315"/>
    <property type="project" value="MGI"/>
</dbReference>
<dbReference type="GO" id="GO:0060563">
    <property type="term" value="P:neuroepithelial cell differentiation"/>
    <property type="evidence" value="ECO:0000315"/>
    <property type="project" value="MGI"/>
</dbReference>
<dbReference type="GO" id="GO:0051402">
    <property type="term" value="P:neuron apoptotic process"/>
    <property type="evidence" value="ECO:0000315"/>
    <property type="project" value="MGI"/>
</dbReference>
<dbReference type="GO" id="GO:0014003">
    <property type="term" value="P:oligodendrocyte development"/>
    <property type="evidence" value="ECO:0000315"/>
    <property type="project" value="MGI"/>
</dbReference>
<dbReference type="GO" id="GO:0038066">
    <property type="term" value="P:p38MAPK cascade"/>
    <property type="evidence" value="ECO:0000315"/>
    <property type="project" value="MGI"/>
</dbReference>
<dbReference type="GO" id="GO:0030501">
    <property type="term" value="P:positive regulation of bone mineralization"/>
    <property type="evidence" value="ECO:0000315"/>
    <property type="project" value="MGI"/>
</dbReference>
<dbReference type="GO" id="GO:0090263">
    <property type="term" value="P:positive regulation of canonical Wnt signaling pathway"/>
    <property type="evidence" value="ECO:0000315"/>
    <property type="project" value="MGI"/>
</dbReference>
<dbReference type="GO" id="GO:0045597">
    <property type="term" value="P:positive regulation of cell differentiation"/>
    <property type="evidence" value="ECO:0000304"/>
    <property type="project" value="ParkinsonsUK-UCL"/>
</dbReference>
<dbReference type="GO" id="GO:0008284">
    <property type="term" value="P:positive regulation of cell population proliferation"/>
    <property type="evidence" value="ECO:0000316"/>
    <property type="project" value="MGI"/>
</dbReference>
<dbReference type="GO" id="GO:0071864">
    <property type="term" value="P:positive regulation of cell proliferation in bone marrow"/>
    <property type="evidence" value="ECO:0000315"/>
    <property type="project" value="MGI"/>
</dbReference>
<dbReference type="GO" id="GO:0001938">
    <property type="term" value="P:positive regulation of endothelial cell proliferation"/>
    <property type="evidence" value="ECO:0000315"/>
    <property type="project" value="MGI"/>
</dbReference>
<dbReference type="GO" id="GO:0070374">
    <property type="term" value="P:positive regulation of ERK1 and ERK2 cascade"/>
    <property type="evidence" value="ECO:0000250"/>
    <property type="project" value="UniProtKB"/>
</dbReference>
<dbReference type="GO" id="GO:0043410">
    <property type="term" value="P:positive regulation of MAPK cascade"/>
    <property type="evidence" value="ECO:0000314"/>
    <property type="project" value="MGI"/>
</dbReference>
<dbReference type="GO" id="GO:0090080">
    <property type="term" value="P:positive regulation of MAPKKK cascade by fibroblast growth factor receptor signaling pathway"/>
    <property type="evidence" value="ECO:0000316"/>
    <property type="project" value="MGI"/>
</dbReference>
<dbReference type="GO" id="GO:0043525">
    <property type="term" value="P:positive regulation of neuron apoptotic process"/>
    <property type="evidence" value="ECO:0000315"/>
    <property type="project" value="MGI"/>
</dbReference>
<dbReference type="GO" id="GO:0051897">
    <property type="term" value="P:positive regulation of phosphatidylinositol 3-kinase/protein kinase B signal transduction"/>
    <property type="evidence" value="ECO:0000250"/>
    <property type="project" value="UniProtKB"/>
</dbReference>
<dbReference type="GO" id="GO:0010518">
    <property type="term" value="P:positive regulation of phospholipase activity"/>
    <property type="evidence" value="ECO:0000250"/>
    <property type="project" value="UniProtKB"/>
</dbReference>
<dbReference type="GO" id="GO:0031398">
    <property type="term" value="P:positive regulation of protein ubiquitination"/>
    <property type="evidence" value="ECO:0000314"/>
    <property type="project" value="MGI"/>
</dbReference>
<dbReference type="GO" id="GO:0042531">
    <property type="term" value="P:positive regulation of tyrosine phosphorylation of STAT protein"/>
    <property type="evidence" value="ECO:0000250"/>
    <property type="project" value="UniProtKB"/>
</dbReference>
<dbReference type="GO" id="GO:0036342">
    <property type="term" value="P:post-anal tail morphogenesis"/>
    <property type="evidence" value="ECO:0000315"/>
    <property type="project" value="BHF-UCL"/>
</dbReference>
<dbReference type="GO" id="GO:0016567">
    <property type="term" value="P:protein ubiquitination"/>
    <property type="evidence" value="ECO:0000314"/>
    <property type="project" value="MGI"/>
</dbReference>
<dbReference type="GO" id="GO:0046850">
    <property type="term" value="P:regulation of bone remodeling"/>
    <property type="evidence" value="ECO:0000315"/>
    <property type="project" value="MGI"/>
</dbReference>
<dbReference type="GO" id="GO:0010712">
    <property type="term" value="P:regulation of collagen metabolic process"/>
    <property type="evidence" value="ECO:0000315"/>
    <property type="project" value="MGI"/>
</dbReference>
<dbReference type="GO" id="GO:0030278">
    <property type="term" value="P:regulation of ossification"/>
    <property type="evidence" value="ECO:0000315"/>
    <property type="project" value="MGI"/>
</dbReference>
<dbReference type="GO" id="GO:0045670">
    <property type="term" value="P:regulation of osteoclast differentiation"/>
    <property type="evidence" value="ECO:0000315"/>
    <property type="project" value="MGI"/>
</dbReference>
<dbReference type="GO" id="GO:0048678">
    <property type="term" value="P:response to axon injury"/>
    <property type="evidence" value="ECO:0000315"/>
    <property type="project" value="MGI"/>
</dbReference>
<dbReference type="GO" id="GO:1904383">
    <property type="term" value="P:response to sodium phosphate"/>
    <property type="evidence" value="ECO:0000314"/>
    <property type="project" value="MGI"/>
</dbReference>
<dbReference type="GO" id="GO:0035019">
    <property type="term" value="P:somatic stem cell population maintenance"/>
    <property type="evidence" value="ECO:0000315"/>
    <property type="project" value="MGI"/>
</dbReference>
<dbReference type="GO" id="GO:0021762">
    <property type="term" value="P:substantia nigra development"/>
    <property type="evidence" value="ECO:0000315"/>
    <property type="project" value="MGI"/>
</dbReference>
<dbReference type="CDD" id="cd05857">
    <property type="entry name" value="IgI_2_FGFR"/>
    <property type="match status" value="1"/>
</dbReference>
<dbReference type="FunFam" id="1.10.510.10:FF:000007">
    <property type="entry name" value="Fibroblast growth factor receptor"/>
    <property type="match status" value="1"/>
</dbReference>
<dbReference type="FunFam" id="2.60.40.10:FF:000016">
    <property type="entry name" value="Fibroblast growth factor receptor"/>
    <property type="match status" value="1"/>
</dbReference>
<dbReference type="FunFam" id="2.60.40.10:FF:000020">
    <property type="entry name" value="Fibroblast growth factor receptor"/>
    <property type="match status" value="1"/>
</dbReference>
<dbReference type="FunFam" id="2.60.40.10:FF:000423">
    <property type="entry name" value="Fibroblast growth factor receptor"/>
    <property type="match status" value="1"/>
</dbReference>
<dbReference type="FunFam" id="3.30.200.20:FF:000011">
    <property type="entry name" value="Fibroblast growth factor receptor"/>
    <property type="match status" value="1"/>
</dbReference>
<dbReference type="Gene3D" id="6.10.250.1740">
    <property type="match status" value="1"/>
</dbReference>
<dbReference type="Gene3D" id="2.60.40.10">
    <property type="entry name" value="Immunoglobulins"/>
    <property type="match status" value="3"/>
</dbReference>
<dbReference type="Gene3D" id="3.30.200.20">
    <property type="entry name" value="Phosphorylase Kinase, domain 1"/>
    <property type="match status" value="1"/>
</dbReference>
<dbReference type="Gene3D" id="1.10.510.10">
    <property type="entry name" value="Transferase(Phosphotransferase) domain 1"/>
    <property type="match status" value="1"/>
</dbReference>
<dbReference type="InterPro" id="IPR016248">
    <property type="entry name" value="FGF_rcpt_fam"/>
</dbReference>
<dbReference type="InterPro" id="IPR007110">
    <property type="entry name" value="Ig-like_dom"/>
</dbReference>
<dbReference type="InterPro" id="IPR036179">
    <property type="entry name" value="Ig-like_dom_sf"/>
</dbReference>
<dbReference type="InterPro" id="IPR013783">
    <property type="entry name" value="Ig-like_fold"/>
</dbReference>
<dbReference type="InterPro" id="IPR013098">
    <property type="entry name" value="Ig_I-set"/>
</dbReference>
<dbReference type="InterPro" id="IPR003599">
    <property type="entry name" value="Ig_sub"/>
</dbReference>
<dbReference type="InterPro" id="IPR003598">
    <property type="entry name" value="Ig_sub2"/>
</dbReference>
<dbReference type="InterPro" id="IPR013151">
    <property type="entry name" value="Immunoglobulin_dom"/>
</dbReference>
<dbReference type="InterPro" id="IPR011009">
    <property type="entry name" value="Kinase-like_dom_sf"/>
</dbReference>
<dbReference type="InterPro" id="IPR000719">
    <property type="entry name" value="Prot_kinase_dom"/>
</dbReference>
<dbReference type="InterPro" id="IPR017441">
    <property type="entry name" value="Protein_kinase_ATP_BS"/>
</dbReference>
<dbReference type="InterPro" id="IPR050122">
    <property type="entry name" value="RTK"/>
</dbReference>
<dbReference type="InterPro" id="IPR001245">
    <property type="entry name" value="Ser-Thr/Tyr_kinase_cat_dom"/>
</dbReference>
<dbReference type="InterPro" id="IPR008266">
    <property type="entry name" value="Tyr_kinase_AS"/>
</dbReference>
<dbReference type="InterPro" id="IPR020635">
    <property type="entry name" value="Tyr_kinase_cat_dom"/>
</dbReference>
<dbReference type="PANTHER" id="PTHR24416:SF505">
    <property type="entry name" value="FIBROBLAST GROWTH FACTOR RECEPTOR 3"/>
    <property type="match status" value="1"/>
</dbReference>
<dbReference type="PANTHER" id="PTHR24416">
    <property type="entry name" value="TYROSINE-PROTEIN KINASE RECEPTOR"/>
    <property type="match status" value="1"/>
</dbReference>
<dbReference type="Pfam" id="PF21165">
    <property type="entry name" value="FGFR3_TM"/>
    <property type="match status" value="1"/>
</dbReference>
<dbReference type="Pfam" id="PF07679">
    <property type="entry name" value="I-set"/>
    <property type="match status" value="1"/>
</dbReference>
<dbReference type="Pfam" id="PF00047">
    <property type="entry name" value="ig"/>
    <property type="match status" value="1"/>
</dbReference>
<dbReference type="Pfam" id="PF13927">
    <property type="entry name" value="Ig_3"/>
    <property type="match status" value="1"/>
</dbReference>
<dbReference type="Pfam" id="PF07714">
    <property type="entry name" value="PK_Tyr_Ser-Thr"/>
    <property type="match status" value="1"/>
</dbReference>
<dbReference type="PIRSF" id="PIRSF000628">
    <property type="entry name" value="FGFR"/>
    <property type="match status" value="1"/>
</dbReference>
<dbReference type="PRINTS" id="PR00109">
    <property type="entry name" value="TYRKINASE"/>
</dbReference>
<dbReference type="SMART" id="SM00409">
    <property type="entry name" value="IG"/>
    <property type="match status" value="3"/>
</dbReference>
<dbReference type="SMART" id="SM00408">
    <property type="entry name" value="IGc2"/>
    <property type="match status" value="3"/>
</dbReference>
<dbReference type="SMART" id="SM00219">
    <property type="entry name" value="TyrKc"/>
    <property type="match status" value="1"/>
</dbReference>
<dbReference type="SUPFAM" id="SSF48726">
    <property type="entry name" value="Immunoglobulin"/>
    <property type="match status" value="3"/>
</dbReference>
<dbReference type="SUPFAM" id="SSF56112">
    <property type="entry name" value="Protein kinase-like (PK-like)"/>
    <property type="match status" value="1"/>
</dbReference>
<dbReference type="PROSITE" id="PS50835">
    <property type="entry name" value="IG_LIKE"/>
    <property type="match status" value="3"/>
</dbReference>
<dbReference type="PROSITE" id="PS00107">
    <property type="entry name" value="PROTEIN_KINASE_ATP"/>
    <property type="match status" value="1"/>
</dbReference>
<dbReference type="PROSITE" id="PS50011">
    <property type="entry name" value="PROTEIN_KINASE_DOM"/>
    <property type="match status" value="1"/>
</dbReference>
<dbReference type="PROSITE" id="PS00109">
    <property type="entry name" value="PROTEIN_KINASE_TYR"/>
    <property type="match status" value="1"/>
</dbReference>
<organism>
    <name type="scientific">Mus musculus</name>
    <name type="common">Mouse</name>
    <dbReference type="NCBI Taxonomy" id="10090"/>
    <lineage>
        <taxon>Eukaryota</taxon>
        <taxon>Metazoa</taxon>
        <taxon>Chordata</taxon>
        <taxon>Craniata</taxon>
        <taxon>Vertebrata</taxon>
        <taxon>Euteleostomi</taxon>
        <taxon>Mammalia</taxon>
        <taxon>Eutheria</taxon>
        <taxon>Euarchontoglires</taxon>
        <taxon>Glires</taxon>
        <taxon>Rodentia</taxon>
        <taxon>Myomorpha</taxon>
        <taxon>Muroidea</taxon>
        <taxon>Muridae</taxon>
        <taxon>Murinae</taxon>
        <taxon>Mus</taxon>
        <taxon>Mus</taxon>
    </lineage>
</organism>
<feature type="signal peptide" evidence="3">
    <location>
        <begin position="1"/>
        <end position="20"/>
    </location>
</feature>
<feature type="chain" id="PRO_0000016786" description="Fibroblast growth factor receptor 3">
    <location>
        <begin position="21"/>
        <end position="801"/>
    </location>
</feature>
<feature type="topological domain" description="Extracellular" evidence="3">
    <location>
        <begin position="21"/>
        <end position="369"/>
    </location>
</feature>
<feature type="transmembrane region" description="Helical" evidence="3">
    <location>
        <begin position="370"/>
        <end position="390"/>
    </location>
</feature>
<feature type="topological domain" description="Cytoplasmic" evidence="3">
    <location>
        <begin position="391"/>
        <end position="801"/>
    </location>
</feature>
<feature type="domain" description="Ig-like C2-type 1">
    <location>
        <begin position="22"/>
        <end position="124"/>
    </location>
</feature>
<feature type="domain" description="Ig-like C2-type 2">
    <location>
        <begin position="145"/>
        <end position="238"/>
    </location>
</feature>
<feature type="domain" description="Ig-like C2-type 3">
    <location>
        <begin position="247"/>
        <end position="349"/>
    </location>
</feature>
<feature type="domain" description="Protein kinase" evidence="5">
    <location>
        <begin position="466"/>
        <end position="756"/>
    </location>
</feature>
<feature type="region of interest" description="Disordered" evidence="7">
    <location>
        <begin position="125"/>
        <end position="146"/>
    </location>
</feature>
<feature type="region of interest" description="Disordered" evidence="7">
    <location>
        <begin position="762"/>
        <end position="801"/>
    </location>
</feature>
<feature type="compositionally biased region" description="Acidic residues" evidence="7">
    <location>
        <begin position="130"/>
        <end position="140"/>
    </location>
</feature>
<feature type="compositionally biased region" description="Low complexity" evidence="7">
    <location>
        <begin position="766"/>
        <end position="782"/>
    </location>
</feature>
<feature type="compositionally biased region" description="Pro residues" evidence="7">
    <location>
        <begin position="790"/>
        <end position="801"/>
    </location>
</feature>
<feature type="active site" description="Proton acceptor" evidence="5 6">
    <location>
        <position position="611"/>
    </location>
</feature>
<feature type="binding site" evidence="5">
    <location>
        <begin position="472"/>
        <end position="480"/>
    </location>
    <ligand>
        <name>ATP</name>
        <dbReference type="ChEBI" id="CHEBI:30616"/>
    </ligand>
</feature>
<feature type="binding site" evidence="5">
    <location>
        <position position="502"/>
    </location>
    <ligand>
        <name>ATP</name>
        <dbReference type="ChEBI" id="CHEBI:30616"/>
    </ligand>
</feature>
<feature type="modified residue" description="Phosphoserine" evidence="15">
    <location>
        <position position="438"/>
    </location>
</feature>
<feature type="modified residue" description="Phosphoserine" evidence="15">
    <location>
        <position position="439"/>
    </location>
</feature>
<feature type="modified residue" description="Phosphotyrosine; by autocatalysis" evidence="2">
    <location>
        <position position="641"/>
    </location>
</feature>
<feature type="modified residue" description="Phosphotyrosine; by autocatalysis" evidence="2">
    <location>
        <position position="642"/>
    </location>
</feature>
<feature type="modified residue" description="Phosphotyrosine; by autocatalysis" evidence="2">
    <location>
        <position position="719"/>
    </location>
</feature>
<feature type="modified residue" description="Phosphotyrosine; by autocatalysis" evidence="2">
    <location>
        <position position="755"/>
    </location>
</feature>
<feature type="glycosylation site" description="N-linked (GlcNAc...) asparagine" evidence="3">
    <location>
        <position position="96"/>
    </location>
</feature>
<feature type="glycosylation site" description="N-linked (GlcNAc...) asparagine" evidence="3">
    <location>
        <position position="219"/>
    </location>
</feature>
<feature type="glycosylation site" description="N-linked (GlcNAc...) asparagine" evidence="3">
    <location>
        <position position="256"/>
    </location>
</feature>
<feature type="glycosylation site" description="N-linked (GlcNAc...) asparagine" evidence="3">
    <location>
        <position position="288"/>
    </location>
</feature>
<feature type="glycosylation site" description="N-linked (GlcNAc...) asparagine" evidence="3">
    <location>
        <position position="309"/>
    </location>
</feature>
<feature type="glycosylation site" description="N-linked (GlcNAc...) asparagine" evidence="3">
    <location>
        <position position="322"/>
    </location>
</feature>
<feature type="disulfide bond" evidence="4">
    <location>
        <begin position="59"/>
        <end position="107"/>
    </location>
</feature>
<feature type="disulfide bond" evidence="4">
    <location>
        <begin position="170"/>
        <end position="222"/>
    </location>
</feature>
<feature type="disulfide bond" evidence="4">
    <location>
        <begin position="269"/>
        <end position="333"/>
    </location>
</feature>
<feature type="splice variant" id="VSP_002990" description="In isoform 2." evidence="14">
    <original>TAGANTTDKELEVLSLHNVTFEDAGEYTCLAGNSIGFSHHSAWLVVLP</original>
    <variation>SWISENVEADARLRLANVSERDGGEYLCRATNFIGVAEKAFWLRVHGPQA</variation>
    <location>
        <begin position="305"/>
        <end position="352"/>
    </location>
</feature>
<feature type="mutagenesis site" description="Constitutively activated kinase." evidence="8">
    <original>K</original>
    <variation>E</variation>
    <location>
        <position position="644"/>
    </location>
</feature>
<feature type="sequence conflict" description="In Ref. 2; AAB25535." evidence="14" ref="2">
    <original>P</original>
    <variation>L</variation>
    <location>
        <position position="684"/>
    </location>
</feature>
<feature type="sequence conflict" description="In Ref. 2; AAB25535." evidence="14" ref="2">
    <location>
        <position position="687"/>
    </location>
</feature>
<reference key="1">
    <citation type="journal article" date="1992" name="J. Biol. Chem.">
        <title>Ligand specificity and heparin dependence of fibroblast growth factor receptors 1 and 3.</title>
        <authorList>
            <person name="Ornitz D.M."/>
            <person name="Leder P."/>
        </authorList>
    </citation>
    <scope>NUCLEOTIDE SEQUENCE [MRNA] (ISOFORM 1)</scope>
</reference>
<reference key="2">
    <citation type="journal article" date="1993" name="Cancer Res.">
        <title>Isolation of the complementary DNA encoding a mouse heparin-binding growth factor receptor with the use of a unique kinase insert sequence.</title>
        <authorList>
            <person name="Katoh O."/>
            <person name="Hattori Y."/>
            <person name="Sasaki H."/>
            <person name="Sakamoto H."/>
            <person name="Fujimoto K."/>
            <person name="Fujii T."/>
            <person name="Sugimura T."/>
            <person name="Terada M."/>
        </authorList>
    </citation>
    <scope>NUCLEOTIDE SEQUENCE [MRNA] (ISOFORM 1)</scope>
    <source>
        <tissue>Brain</tissue>
    </source>
</reference>
<reference key="3">
    <citation type="journal article" date="1994" name="J. Biol. Chem.">
        <title>Fibroblast growth factor receptor (FGFR) 3. Alternative splicing in immunoglobulin-like domain III creates a receptor highly specific for acidic FGF/FGF-1.</title>
        <authorList>
            <person name="Chellaiah A.T."/>
            <person name="McEwen D.G."/>
            <person name="Werner S."/>
            <person name="Xu J."/>
            <person name="Ornitz D.M."/>
        </authorList>
    </citation>
    <scope>NUCLEOTIDE SEQUENCE [GENOMIC DNA] OF 242-364 (ISOFORM 2)</scope>
</reference>
<reference key="4">
    <citation type="journal article" date="1996" name="Cell">
        <title>Fibroblast growth factor receptor 3 is a negative regulator of bone growth.</title>
        <authorList>
            <person name="Deng C."/>
            <person name="Wynshaw-Boris A."/>
            <person name="Zhou F."/>
            <person name="Kuo A."/>
            <person name="Leder P."/>
        </authorList>
    </citation>
    <scope>DISRUPTION PHENOTYPE</scope>
    <scope>FUNCTION</scope>
</reference>
<reference key="5">
    <citation type="journal article" date="1996" name="J. Biol. Chem.">
        <title>Receptor specificity of the fibroblast growth factor family.</title>
        <authorList>
            <person name="Ornitz D.M."/>
            <person name="Xu J."/>
            <person name="Colvin J.S."/>
            <person name="McEwen D.G."/>
            <person name="MacArthur C.A."/>
            <person name="Coulier F."/>
            <person name="Gao G."/>
            <person name="Goldfarb M."/>
        </authorList>
    </citation>
    <scope>INTERACTION WITH FGF1; FGF2; FGF4; FGF8 AND FGF9</scope>
    <scope>FUNCTION IN CELL PROLIFERATION</scope>
</reference>
<reference key="6">
    <citation type="journal article" date="1996" name="Nat. Genet.">
        <title>Skeletal overgrowth and deafness in mice lacking fibroblast growth factor receptor 3.</title>
        <authorList>
            <person name="Colvin J.S."/>
            <person name="Bohne B.A."/>
            <person name="Harding G.W."/>
            <person name="McEwen D.G."/>
            <person name="Ornitz D.M."/>
        </authorList>
    </citation>
    <scope>DISRUPTION PHENOTYPE</scope>
    <scope>FUNCTION</scope>
</reference>
<reference key="7">
    <citation type="journal article" date="1998" name="Development">
        <title>FGFR-3 and FGFR-4 function cooperatively to direct alveogenesis in the murine lung.</title>
        <authorList>
            <person name="Weinstein M."/>
            <person name="Xu X."/>
            <person name="Ohyama K."/>
            <person name="Deng C.X."/>
        </authorList>
    </citation>
    <scope>DISRUPTION PHENOTYPE</scope>
    <scope>FUNCTION</scope>
</reference>
<reference key="8">
    <citation type="journal article" date="2004" name="Proc. Natl. Acad. Sci. U.S.A.">
        <title>Defective lysosomal targeting of activated fibroblast growth factor receptor 3 in achondroplasia.</title>
        <authorList>
            <person name="Cho J.Y."/>
            <person name="Guo C."/>
            <person name="Torello M."/>
            <person name="Lunstrum G.P."/>
            <person name="Iwata T."/>
            <person name="Deng C."/>
            <person name="Horton W.A."/>
        </authorList>
    </citation>
    <scope>FUNCTION AS FGF2 RECEPTOR AND IN PHOSPHORYLATION OF CBL</scope>
    <scope>UBIQUITINATION</scope>
    <scope>PHOSPHORYLATION</scope>
    <scope>ACTIVITY REGULATION</scope>
    <scope>MUTAGENESIS OF 644</scope>
</reference>
<reference key="9">
    <citation type="journal article" date="2010" name="Cell">
        <title>A tissue-specific atlas of mouse protein phosphorylation and expression.</title>
        <authorList>
            <person name="Huttlin E.L."/>
            <person name="Jedrychowski M.P."/>
            <person name="Elias J.E."/>
            <person name="Goswami T."/>
            <person name="Rad R."/>
            <person name="Beausoleil S.A."/>
            <person name="Villen J."/>
            <person name="Haas W."/>
            <person name="Sowa M.E."/>
            <person name="Gygi S.P."/>
        </authorList>
    </citation>
    <scope>PHOSPHORYLATION [LARGE SCALE ANALYSIS] AT SER-438 AND SER-439</scope>
    <scope>IDENTIFICATION BY MASS SPECTROMETRY [LARGE SCALE ANALYSIS]</scope>
    <source>
        <tissue>Brain</tissue>
        <tissue>Lung</tissue>
    </source>
</reference>
<reference key="10">
    <citation type="journal article" date="2011" name="Am. J. Physiol.">
        <title>Regulation of serum 1,25(OH)2Vitamin D3 levels by fibroblast growth factor 23 is mediated by FGF receptors 3 and 4.</title>
        <authorList>
            <person name="Gattineni J."/>
            <person name="Twombley K."/>
            <person name="Goetz R."/>
            <person name="Mohammadi M."/>
            <person name="Baum M."/>
        </authorList>
    </citation>
    <scope>DISRUPTION PHENOTYPE</scope>
    <scope>FUNCTION IN VITAMIN D METABOLISM</scope>
</reference>
<name>FGFR3_MOUSE</name>
<proteinExistence type="evidence at protein level"/>
<gene>
    <name type="primary">Fgfr3</name>
    <name type="synonym">Mfr3</name>
    <name type="synonym">Sam3</name>
</gene>
<evidence type="ECO:0000250" key="1"/>
<evidence type="ECO:0000250" key="2">
    <source>
        <dbReference type="UniProtKB" id="P22607"/>
    </source>
</evidence>
<evidence type="ECO:0000255" key="3"/>
<evidence type="ECO:0000255" key="4">
    <source>
        <dbReference type="PROSITE-ProRule" id="PRU00114"/>
    </source>
</evidence>
<evidence type="ECO:0000255" key="5">
    <source>
        <dbReference type="PROSITE-ProRule" id="PRU00159"/>
    </source>
</evidence>
<evidence type="ECO:0000255" key="6">
    <source>
        <dbReference type="PROSITE-ProRule" id="PRU10028"/>
    </source>
</evidence>
<evidence type="ECO:0000256" key="7">
    <source>
        <dbReference type="SAM" id="MobiDB-lite"/>
    </source>
</evidence>
<evidence type="ECO:0000269" key="8">
    <source>
    </source>
</evidence>
<evidence type="ECO:0000269" key="9">
    <source>
    </source>
</evidence>
<evidence type="ECO:0000269" key="10">
    <source>
    </source>
</evidence>
<evidence type="ECO:0000269" key="11">
    <source>
    </source>
</evidence>
<evidence type="ECO:0000269" key="12">
    <source>
    </source>
</evidence>
<evidence type="ECO:0000269" key="13">
    <source>
    </source>
</evidence>
<evidence type="ECO:0000305" key="14"/>
<evidence type="ECO:0007744" key="15">
    <source>
    </source>
</evidence>
<accession>Q61851</accession>
<accession>Q61564</accession>
<accession>Q63834</accession>
<sequence length="801" mass="87758">MVVPACVLVFCVAVVAGATSEPPGPEQRVVRRAAEVPGPEPSQQEQVAFGSGDTVELSCHPPGGAPTGPTVWAKDGTGLVASHRILVGPQRLQVLNASHEDAGVYSCQHRLTRRVLCHFSVRVTDAPSSGDDEDGEDVAEDTGAPYWTRPERMDKKLLAVPAANTVRFRCPAAGNPTPSISWLKNGKEFRGEHRIGGIKLRHQQWSLVMESVVPSDRGNYTCVVENKFGSIRQTYTLDVLERSPHRPILQAGLPANQTAILGSDVEFHCKVYSDAQPHIQWLKHVEVNGSKVGPDGTPYVTVLKTAGANTTDKELEVLSLHNVTFEDAGEYTCLAGNSIGFSHHSAWLVVLPAEEELMETDEAGSVYAGVLSYGVVFFLFILVVAAVILCRLRSPPKKGLGSPTVHKVSRFPLKRQVSLESNSSMNSNTPLVRIARLSSGEGPVLANVSELELPADPKWELSRTRLTLGKPLGEGCFGQVVMAEAIGIDKDRTAKPVTVAVKMLKDDATDKDLSDLVSEMEMMKMIGKHKNIINLLGACTQGGPLYVLVEYAAKGNLREFLRARRPPGMDYSFDACRLPEEQLTCKDLVSCAYQVARGMEYLASQKCIHRDLAARNVLVTEDNVMKIADFGLARDVHNLDYYKKTTNGRLPVKWMAPEALFDRVYTHQSDVWSFGVLLWEIFTPGGPSPYPGIPVEELFKLLKEGHRMDKPASCTHDLYMIMRECWHAVPSQRPTFKQLVEDLDRILTVTSTDEYLDLSVPFEQYSPGGQDTPSSSSSGDDSVFTHDLLPPGPPSNGGPRT</sequence>